<accession>B2HZ83</accession>
<keyword id="KW-0240">DNA-directed RNA polymerase</keyword>
<keyword id="KW-0548">Nucleotidyltransferase</keyword>
<keyword id="KW-0804">Transcription</keyword>
<keyword id="KW-0808">Transferase</keyword>
<protein>
    <recommendedName>
        <fullName evidence="1">DNA-directed RNA polymerase subunit alpha</fullName>
        <shortName evidence="1">RNAP subunit alpha</shortName>
        <ecNumber evidence="1">2.7.7.6</ecNumber>
    </recommendedName>
    <alternativeName>
        <fullName evidence="1">RNA polymerase subunit alpha</fullName>
    </alternativeName>
    <alternativeName>
        <fullName evidence="1">Transcriptase subunit alpha</fullName>
    </alternativeName>
</protein>
<reference key="1">
    <citation type="journal article" date="2008" name="Antimicrob. Agents Chemother.">
        <title>Whole-genome pyrosequencing of an epidemic multidrug-resistant Acinetobacter baumannii strain belonging to the European clone II group.</title>
        <authorList>
            <person name="Iacono M."/>
            <person name="Villa L."/>
            <person name="Fortini D."/>
            <person name="Bordoni R."/>
            <person name="Imperi F."/>
            <person name="Bonnal R.J."/>
            <person name="Sicheritz-Ponten T."/>
            <person name="De Bellis G."/>
            <person name="Visca P."/>
            <person name="Cassone A."/>
            <person name="Carattoli A."/>
        </authorList>
    </citation>
    <scope>NUCLEOTIDE SEQUENCE [LARGE SCALE GENOMIC DNA]</scope>
    <source>
        <strain>ACICU</strain>
    </source>
</reference>
<proteinExistence type="inferred from homology"/>
<dbReference type="EC" id="2.7.7.6" evidence="1"/>
<dbReference type="EMBL" id="CP000863">
    <property type="protein sequence ID" value="ACC58565.1"/>
    <property type="molecule type" value="Genomic_DNA"/>
</dbReference>
<dbReference type="RefSeq" id="WP_000198631.1">
    <property type="nucleotide sequence ID" value="NZ_CP031380.1"/>
</dbReference>
<dbReference type="SMR" id="B2HZ83"/>
<dbReference type="GeneID" id="92895292"/>
<dbReference type="KEGG" id="abc:ACICU_03253"/>
<dbReference type="HOGENOM" id="CLU_053084_0_0_6"/>
<dbReference type="Proteomes" id="UP000008839">
    <property type="component" value="Chromosome"/>
</dbReference>
<dbReference type="GO" id="GO:0005737">
    <property type="term" value="C:cytoplasm"/>
    <property type="evidence" value="ECO:0007669"/>
    <property type="project" value="UniProtKB-ARBA"/>
</dbReference>
<dbReference type="GO" id="GO:0000428">
    <property type="term" value="C:DNA-directed RNA polymerase complex"/>
    <property type="evidence" value="ECO:0007669"/>
    <property type="project" value="UniProtKB-KW"/>
</dbReference>
<dbReference type="GO" id="GO:0003677">
    <property type="term" value="F:DNA binding"/>
    <property type="evidence" value="ECO:0007669"/>
    <property type="project" value="UniProtKB-UniRule"/>
</dbReference>
<dbReference type="GO" id="GO:0003899">
    <property type="term" value="F:DNA-directed RNA polymerase activity"/>
    <property type="evidence" value="ECO:0007669"/>
    <property type="project" value="UniProtKB-UniRule"/>
</dbReference>
<dbReference type="GO" id="GO:0046983">
    <property type="term" value="F:protein dimerization activity"/>
    <property type="evidence" value="ECO:0007669"/>
    <property type="project" value="InterPro"/>
</dbReference>
<dbReference type="GO" id="GO:0006351">
    <property type="term" value="P:DNA-templated transcription"/>
    <property type="evidence" value="ECO:0007669"/>
    <property type="project" value="UniProtKB-UniRule"/>
</dbReference>
<dbReference type="CDD" id="cd06928">
    <property type="entry name" value="RNAP_alpha_NTD"/>
    <property type="match status" value="1"/>
</dbReference>
<dbReference type="FunFam" id="1.10.150.20:FF:000001">
    <property type="entry name" value="DNA-directed RNA polymerase subunit alpha"/>
    <property type="match status" value="1"/>
</dbReference>
<dbReference type="FunFam" id="2.170.120.12:FF:000001">
    <property type="entry name" value="DNA-directed RNA polymerase subunit alpha"/>
    <property type="match status" value="1"/>
</dbReference>
<dbReference type="Gene3D" id="1.10.150.20">
    <property type="entry name" value="5' to 3' exonuclease, C-terminal subdomain"/>
    <property type="match status" value="1"/>
</dbReference>
<dbReference type="Gene3D" id="2.170.120.12">
    <property type="entry name" value="DNA-directed RNA polymerase, insert domain"/>
    <property type="match status" value="1"/>
</dbReference>
<dbReference type="Gene3D" id="3.30.1360.10">
    <property type="entry name" value="RNA polymerase, RBP11-like subunit"/>
    <property type="match status" value="1"/>
</dbReference>
<dbReference type="HAMAP" id="MF_00059">
    <property type="entry name" value="RNApol_bact_RpoA"/>
    <property type="match status" value="1"/>
</dbReference>
<dbReference type="InterPro" id="IPR011262">
    <property type="entry name" value="DNA-dir_RNA_pol_insert"/>
</dbReference>
<dbReference type="InterPro" id="IPR011263">
    <property type="entry name" value="DNA-dir_RNA_pol_RpoA/D/Rpb3"/>
</dbReference>
<dbReference type="InterPro" id="IPR011773">
    <property type="entry name" value="DNA-dir_RpoA"/>
</dbReference>
<dbReference type="InterPro" id="IPR036603">
    <property type="entry name" value="RBP11-like"/>
</dbReference>
<dbReference type="InterPro" id="IPR011260">
    <property type="entry name" value="RNAP_asu_C"/>
</dbReference>
<dbReference type="InterPro" id="IPR036643">
    <property type="entry name" value="RNApol_insert_sf"/>
</dbReference>
<dbReference type="NCBIfam" id="NF003513">
    <property type="entry name" value="PRK05182.1-2"/>
    <property type="match status" value="1"/>
</dbReference>
<dbReference type="NCBIfam" id="NF003519">
    <property type="entry name" value="PRK05182.2-5"/>
    <property type="match status" value="1"/>
</dbReference>
<dbReference type="NCBIfam" id="TIGR02027">
    <property type="entry name" value="rpoA"/>
    <property type="match status" value="1"/>
</dbReference>
<dbReference type="Pfam" id="PF01000">
    <property type="entry name" value="RNA_pol_A_bac"/>
    <property type="match status" value="1"/>
</dbReference>
<dbReference type="Pfam" id="PF03118">
    <property type="entry name" value="RNA_pol_A_CTD"/>
    <property type="match status" value="1"/>
</dbReference>
<dbReference type="Pfam" id="PF01193">
    <property type="entry name" value="RNA_pol_L"/>
    <property type="match status" value="1"/>
</dbReference>
<dbReference type="SMART" id="SM00662">
    <property type="entry name" value="RPOLD"/>
    <property type="match status" value="1"/>
</dbReference>
<dbReference type="SUPFAM" id="SSF47789">
    <property type="entry name" value="C-terminal domain of RNA polymerase alpha subunit"/>
    <property type="match status" value="1"/>
</dbReference>
<dbReference type="SUPFAM" id="SSF56553">
    <property type="entry name" value="Insert subdomain of RNA polymerase alpha subunit"/>
    <property type="match status" value="1"/>
</dbReference>
<dbReference type="SUPFAM" id="SSF55257">
    <property type="entry name" value="RBP11-like subunits of RNA polymerase"/>
    <property type="match status" value="1"/>
</dbReference>
<name>RPOA_ACIBC</name>
<feature type="chain" id="PRO_1000091918" description="DNA-directed RNA polymerase subunit alpha">
    <location>
        <begin position="1"/>
        <end position="335"/>
    </location>
</feature>
<feature type="region of interest" description="Alpha N-terminal domain (alpha-NTD)" evidence="1">
    <location>
        <begin position="1"/>
        <end position="233"/>
    </location>
</feature>
<feature type="region of interest" description="Alpha C-terminal domain (alpha-CTD)" evidence="1">
    <location>
        <begin position="247"/>
        <end position="335"/>
    </location>
</feature>
<comment type="function">
    <text evidence="1">DNA-dependent RNA polymerase catalyzes the transcription of DNA into RNA using the four ribonucleoside triphosphates as substrates.</text>
</comment>
<comment type="catalytic activity">
    <reaction evidence="1">
        <text>RNA(n) + a ribonucleoside 5'-triphosphate = RNA(n+1) + diphosphate</text>
        <dbReference type="Rhea" id="RHEA:21248"/>
        <dbReference type="Rhea" id="RHEA-COMP:14527"/>
        <dbReference type="Rhea" id="RHEA-COMP:17342"/>
        <dbReference type="ChEBI" id="CHEBI:33019"/>
        <dbReference type="ChEBI" id="CHEBI:61557"/>
        <dbReference type="ChEBI" id="CHEBI:140395"/>
        <dbReference type="EC" id="2.7.7.6"/>
    </reaction>
</comment>
<comment type="subunit">
    <text evidence="1">Homodimer. The RNAP catalytic core consists of 2 alpha, 1 beta, 1 beta' and 1 omega subunit. When a sigma factor is associated with the core the holoenzyme is formed, which can initiate transcription.</text>
</comment>
<comment type="domain">
    <text evidence="1">The N-terminal domain is essential for RNAP assembly and basal transcription, whereas the C-terminal domain is involved in interaction with transcriptional regulators and with upstream promoter elements.</text>
</comment>
<comment type="similarity">
    <text evidence="1">Belongs to the RNA polymerase alpha chain family.</text>
</comment>
<evidence type="ECO:0000255" key="1">
    <source>
        <dbReference type="HAMAP-Rule" id="MF_00059"/>
    </source>
</evidence>
<sequence>MTRTANEFLTPQAIKVEAVSGTSAKVILEPLERGFGHTLGNALRRILLSSLPGAAVVEVEIEGVEHEYSTLEGLQQDIVELLLNLKGLSIKLFDQNEAYLTLEKQGPGDITAADLRLPHNVEVVNPEHLIGTLSATGSLKMRLKVSQGRGYETSDSRFPEGETRPVGRLQLDASYSPIKRVSYTVENARVEQRTDLDKLVIDLETNGTVDPEEAIRKAATILQQQIAIFVDLQKDQTPVAQEPREEVDPILLRPVDDLELTVRSANCLKAENIYYIGDLVQRTEVELLKTPNLGKKSLTEIKDVLASKGLQLGMRLENWPPASLRMDDRFAYRSR</sequence>
<organism>
    <name type="scientific">Acinetobacter baumannii (strain ACICU)</name>
    <dbReference type="NCBI Taxonomy" id="405416"/>
    <lineage>
        <taxon>Bacteria</taxon>
        <taxon>Pseudomonadati</taxon>
        <taxon>Pseudomonadota</taxon>
        <taxon>Gammaproteobacteria</taxon>
        <taxon>Moraxellales</taxon>
        <taxon>Moraxellaceae</taxon>
        <taxon>Acinetobacter</taxon>
        <taxon>Acinetobacter calcoaceticus/baumannii complex</taxon>
    </lineage>
</organism>
<gene>
    <name evidence="1" type="primary">rpoA</name>
    <name type="ordered locus">ACICU_03253</name>
</gene>